<keyword id="KW-0040">ANK repeat</keyword>
<keyword id="KW-0677">Repeat</keyword>
<protein>
    <recommendedName>
        <fullName>Putative ankyrin repeat protein RBE_0347</fullName>
    </recommendedName>
</protein>
<organism>
    <name type="scientific">Rickettsia bellii (strain RML369-C)</name>
    <dbReference type="NCBI Taxonomy" id="336407"/>
    <lineage>
        <taxon>Bacteria</taxon>
        <taxon>Pseudomonadati</taxon>
        <taxon>Pseudomonadota</taxon>
        <taxon>Alphaproteobacteria</taxon>
        <taxon>Rickettsiales</taxon>
        <taxon>Rickettsiaceae</taxon>
        <taxon>Rickettsieae</taxon>
        <taxon>Rickettsia</taxon>
        <taxon>belli group</taxon>
    </lineage>
</organism>
<name>Y347_RICBR</name>
<proteinExistence type="predicted"/>
<accession>Q1RJN6</accession>
<feature type="chain" id="PRO_0000280909" description="Putative ankyrin repeat protein RBE_0347">
    <location>
        <begin position="1"/>
        <end position="334"/>
    </location>
</feature>
<feature type="repeat" description="ANK 1">
    <location>
        <begin position="80"/>
        <end position="90"/>
    </location>
</feature>
<feature type="repeat" description="ANK 2">
    <location>
        <begin position="91"/>
        <end position="120"/>
    </location>
</feature>
<feature type="repeat" description="ANK 3">
    <location>
        <begin position="124"/>
        <end position="161"/>
    </location>
</feature>
<feature type="repeat" description="ANK 4">
    <location>
        <begin position="162"/>
        <end position="191"/>
    </location>
</feature>
<gene>
    <name type="ordered locus">RBE_0347</name>
</gene>
<reference key="1">
    <citation type="journal article" date="2006" name="PLoS Genet.">
        <title>Genome sequence of Rickettsia bellii illuminates the role of amoebae in gene exchanges between intracellular pathogens.</title>
        <authorList>
            <person name="Ogata H."/>
            <person name="La Scola B."/>
            <person name="Audic S."/>
            <person name="Renesto P."/>
            <person name="Blanc G."/>
            <person name="Robert C."/>
            <person name="Fournier P.-E."/>
            <person name="Claverie J.-M."/>
            <person name="Raoult D."/>
        </authorList>
    </citation>
    <scope>NUCLEOTIDE SEQUENCE [LARGE SCALE GENOMIC DNA]</scope>
    <source>
        <strain>RML369-C</strain>
    </source>
</reference>
<sequence length="334" mass="37111">MSKNNYYPYPPTLGKVFLFKRGPEIVSMESSETIQPADKLESILNSTSTITAELLFNTFDIPGISSKTDKLKLLFQKAFEQGINPNIQDSSGNTLLLYACQSSLVEVVQFLLKKGANPNISNNSDNTPLSKIISNRFIDKTEIYIAKLLLQNGALTELKDFVGFTPIQSATQYGHTEIVKSLIQNGADINVIASIETNSYYSGKSLVESVPSNKPELKALLTLTKACKDNNFSIVDNTITAKDIVEFIDWQLSITPENSRFFDKHLSELDNLKNFLETKELVSNETIQKINEHITSYSTTEISSPDVTPSFINEAEHQEYNLAGETDKSAPETA</sequence>
<dbReference type="EMBL" id="CP000087">
    <property type="protein sequence ID" value="ABE04428.1"/>
    <property type="molecule type" value="Genomic_DNA"/>
</dbReference>
<dbReference type="RefSeq" id="WP_011477037.1">
    <property type="nucleotide sequence ID" value="NC_007940.1"/>
</dbReference>
<dbReference type="SMR" id="Q1RJN6"/>
<dbReference type="KEGG" id="rbe:RBE_0347"/>
<dbReference type="eggNOG" id="COG0666">
    <property type="taxonomic scope" value="Bacteria"/>
</dbReference>
<dbReference type="HOGENOM" id="CLU_791975_0_0_5"/>
<dbReference type="OrthoDB" id="7390289at2"/>
<dbReference type="Proteomes" id="UP000001951">
    <property type="component" value="Chromosome"/>
</dbReference>
<dbReference type="GO" id="GO:0005737">
    <property type="term" value="C:cytoplasm"/>
    <property type="evidence" value="ECO:0007669"/>
    <property type="project" value="TreeGrafter"/>
</dbReference>
<dbReference type="Gene3D" id="1.25.40.20">
    <property type="entry name" value="Ankyrin repeat-containing domain"/>
    <property type="match status" value="1"/>
</dbReference>
<dbReference type="InterPro" id="IPR002110">
    <property type="entry name" value="Ankyrin_rpt"/>
</dbReference>
<dbReference type="InterPro" id="IPR036770">
    <property type="entry name" value="Ankyrin_rpt-contain_sf"/>
</dbReference>
<dbReference type="PANTHER" id="PTHR24198">
    <property type="entry name" value="ANKYRIN REPEAT AND PROTEIN KINASE DOMAIN-CONTAINING PROTEIN"/>
    <property type="match status" value="1"/>
</dbReference>
<dbReference type="PANTHER" id="PTHR24198:SF165">
    <property type="entry name" value="ANKYRIN REPEAT-CONTAINING PROTEIN-RELATED"/>
    <property type="match status" value="1"/>
</dbReference>
<dbReference type="Pfam" id="PF00023">
    <property type="entry name" value="Ank"/>
    <property type="match status" value="1"/>
</dbReference>
<dbReference type="Pfam" id="PF12796">
    <property type="entry name" value="Ank_2"/>
    <property type="match status" value="1"/>
</dbReference>
<dbReference type="SMART" id="SM00248">
    <property type="entry name" value="ANK"/>
    <property type="match status" value="3"/>
</dbReference>
<dbReference type="SUPFAM" id="SSF48403">
    <property type="entry name" value="Ankyrin repeat"/>
    <property type="match status" value="1"/>
</dbReference>
<dbReference type="PROSITE" id="PS50297">
    <property type="entry name" value="ANK_REP_REGION"/>
    <property type="match status" value="1"/>
</dbReference>
<dbReference type="PROSITE" id="PS50088">
    <property type="entry name" value="ANK_REPEAT"/>
    <property type="match status" value="2"/>
</dbReference>